<reference key="1">
    <citation type="journal article" date="1997" name="Nature">
        <title>The nucleotide sequence of Saccharomyces cerevisiae chromosome XIV and its evolutionary implications.</title>
        <authorList>
            <person name="Philippsen P."/>
            <person name="Kleine K."/>
            <person name="Poehlmann R."/>
            <person name="Duesterhoeft A."/>
            <person name="Hamberg K."/>
            <person name="Hegemann J.H."/>
            <person name="Obermaier B."/>
            <person name="Urrestarazu L.A."/>
            <person name="Aert R."/>
            <person name="Albermann K."/>
            <person name="Altmann R."/>
            <person name="Andre B."/>
            <person name="Baladron V."/>
            <person name="Ballesta J.P.G."/>
            <person name="Becam A.-M."/>
            <person name="Beinhauer J.D."/>
            <person name="Boskovic J."/>
            <person name="Buitrago M.J."/>
            <person name="Bussereau F."/>
            <person name="Coster F."/>
            <person name="Crouzet M."/>
            <person name="D'Angelo M."/>
            <person name="Dal Pero F."/>
            <person name="De Antoni A."/>
            <person name="del Rey F."/>
            <person name="Doignon F."/>
            <person name="Domdey H."/>
            <person name="Dubois E."/>
            <person name="Fiedler T.A."/>
            <person name="Fleig U."/>
            <person name="Floeth M."/>
            <person name="Fritz C."/>
            <person name="Gaillardin C."/>
            <person name="Garcia-Cantalejo J.M."/>
            <person name="Glansdorff N."/>
            <person name="Goffeau A."/>
            <person name="Gueldener U."/>
            <person name="Herbert C.J."/>
            <person name="Heumann K."/>
            <person name="Heuss-Neitzel D."/>
            <person name="Hilbert H."/>
            <person name="Hinni K."/>
            <person name="Iraqui Houssaini I."/>
            <person name="Jacquet M."/>
            <person name="Jimenez A."/>
            <person name="Jonniaux J.-L."/>
            <person name="Karpfinger-Hartl L."/>
            <person name="Lanfranchi G."/>
            <person name="Lepingle A."/>
            <person name="Levesque H."/>
            <person name="Lyck R."/>
            <person name="Maftahi M."/>
            <person name="Mallet L."/>
            <person name="Maurer C.T.C."/>
            <person name="Messenguy F."/>
            <person name="Mewes H.-W."/>
            <person name="Moestl D."/>
            <person name="Nasr F."/>
            <person name="Nicaud J.-M."/>
            <person name="Niedenthal R.K."/>
            <person name="Pandolfo D."/>
            <person name="Pierard A."/>
            <person name="Piravandi E."/>
            <person name="Planta R.J."/>
            <person name="Pohl T.M."/>
            <person name="Purnelle B."/>
            <person name="Rebischung C."/>
            <person name="Remacha M.A."/>
            <person name="Revuelta J.L."/>
            <person name="Rinke M."/>
            <person name="Saiz J.E."/>
            <person name="Sartorello F."/>
            <person name="Scherens B."/>
            <person name="Sen-Gupta M."/>
            <person name="Soler-Mira A."/>
            <person name="Urbanus J.H.M."/>
            <person name="Valle G."/>
            <person name="Van Dyck L."/>
            <person name="Verhasselt P."/>
            <person name="Vierendeels F."/>
            <person name="Vissers S."/>
            <person name="Voet M."/>
            <person name="Volckaert G."/>
            <person name="Wach A."/>
            <person name="Wambutt R."/>
            <person name="Wedler H."/>
            <person name="Zollner A."/>
            <person name="Hani J."/>
        </authorList>
    </citation>
    <scope>NUCLEOTIDE SEQUENCE [LARGE SCALE GENOMIC DNA]</scope>
    <source>
        <strain>ATCC 204508 / S288c</strain>
    </source>
</reference>
<reference key="2">
    <citation type="journal article" date="2014" name="G3 (Bethesda)">
        <title>The reference genome sequence of Saccharomyces cerevisiae: Then and now.</title>
        <authorList>
            <person name="Engel S.R."/>
            <person name="Dietrich F.S."/>
            <person name="Fisk D.G."/>
            <person name="Binkley G."/>
            <person name="Balakrishnan R."/>
            <person name="Costanzo M.C."/>
            <person name="Dwight S.S."/>
            <person name="Hitz B.C."/>
            <person name="Karra K."/>
            <person name="Nash R.S."/>
            <person name="Weng S."/>
            <person name="Wong E.D."/>
            <person name="Lloyd P."/>
            <person name="Skrzypek M.S."/>
            <person name="Miyasato S.R."/>
            <person name="Simison M."/>
            <person name="Cherry J.M."/>
        </authorList>
    </citation>
    <scope>GENOME REANNOTATION</scope>
    <source>
        <strain>ATCC 204508 / S288c</strain>
    </source>
</reference>
<reference key="3">
    <citation type="journal article" date="2007" name="Genome Res.">
        <title>Approaching a complete repository of sequence-verified protein-encoding clones for Saccharomyces cerevisiae.</title>
        <authorList>
            <person name="Hu Y."/>
            <person name="Rolfs A."/>
            <person name="Bhullar B."/>
            <person name="Murthy T.V.S."/>
            <person name="Zhu C."/>
            <person name="Berger M.F."/>
            <person name="Camargo A.A."/>
            <person name="Kelley F."/>
            <person name="McCarron S."/>
            <person name="Jepson D."/>
            <person name="Richardson A."/>
            <person name="Raphael J."/>
            <person name="Moreira D."/>
            <person name="Taycher E."/>
            <person name="Zuo D."/>
            <person name="Mohr S."/>
            <person name="Kane M.F."/>
            <person name="Williamson J."/>
            <person name="Simpson A.J.G."/>
            <person name="Bulyk M.L."/>
            <person name="Harlow E."/>
            <person name="Marsischky G."/>
            <person name="Kolodner R.D."/>
            <person name="LaBaer J."/>
        </authorList>
    </citation>
    <scope>NUCLEOTIDE SEQUENCE [GENOMIC DNA]</scope>
    <source>
        <strain>ATCC 204508 / S288c</strain>
    </source>
</reference>
<reference key="4">
    <citation type="journal article" date="2001" name="J. Ind. Microbiol. Biotechnol.">
        <title>Cross-genomic analysis of the translational systems of various organisms.</title>
        <authorList>
            <person name="Fujita K."/>
            <person name="Horie T."/>
            <person name="Isono K."/>
        </authorList>
    </citation>
    <scope>FUNCTION</scope>
</reference>
<reference key="5">
    <citation type="journal article" date="2003" name="Nature">
        <title>Global analysis of protein expression in yeast.</title>
        <authorList>
            <person name="Ghaemmaghami S."/>
            <person name="Huh W.-K."/>
            <person name="Bower K."/>
            <person name="Howson R.W."/>
            <person name="Belle A."/>
            <person name="Dephoure N."/>
            <person name="O'Shea E.K."/>
            <person name="Weissman J.S."/>
        </authorList>
    </citation>
    <scope>LEVEL OF PROTEIN EXPRESSION [LARGE SCALE ANALYSIS]</scope>
</reference>
<reference key="6">
    <citation type="journal article" date="2006" name="J. Proteome Res.">
        <title>Toward the complete yeast mitochondrial proteome: multidimensional separation techniques for mitochondrial proteomics.</title>
        <authorList>
            <person name="Reinders J."/>
            <person name="Zahedi R.P."/>
            <person name="Pfanner N."/>
            <person name="Meisinger C."/>
            <person name="Sickmann A."/>
        </authorList>
    </citation>
    <scope>SUBCELLULAR LOCATION [LARGE SCALE ANALYSIS]</scope>
    <scope>IDENTIFICATION BY MASS SPECTROMETRY</scope>
</reference>
<reference key="7">
    <citation type="journal article" date="2015" name="Nat. Commun.">
        <title>Organization of the mitochondrial translation machinery studied in situ by cryoelectron tomography.</title>
        <authorList>
            <person name="Pfeffer S."/>
            <person name="Woellhaf M.W."/>
            <person name="Herrmann J.M."/>
            <person name="Forster F."/>
        </authorList>
    </citation>
    <scope>SUBCELLULAR LOCATION</scope>
</reference>
<reference key="8">
    <citation type="journal article" date="2017" name="Science">
        <title>The structure of the yeast mitochondrial ribosome.</title>
        <authorList>
            <person name="Desai N."/>
            <person name="Brown A."/>
            <person name="Amunts A."/>
            <person name="Ramakrishnan V."/>
        </authorList>
    </citation>
    <scope>STRUCTURE BY ELECTRON MICROSCOPY (3.25 ANGSTROMS)</scope>
    <scope>SUBUNIT</scope>
</reference>
<accession>P53732</accession>
<accession>D6W1L2</accession>
<keyword id="KW-0002">3D-structure</keyword>
<keyword id="KW-0496">Mitochondrion</keyword>
<keyword id="KW-1185">Reference proteome</keyword>
<keyword id="KW-0687">Ribonucleoprotein</keyword>
<keyword id="KW-0689">Ribosomal protein</keyword>
<keyword id="KW-0809">Transit peptide</keyword>
<comment type="function">
    <text evidence="2 9 10">Component of the mitochondrial ribosome (mitoribosome), a dedicated translation machinery responsible for the synthesis of mitochondrial genome-encoded proteins, including at least some of the essential transmembrane subunits of the mitochondrial respiratory chain. The mitoribosomes are attached to the mitochondrial inner membrane and translation products are cotranslationally integrated into the membrane (PubMed:25609543, PubMed:28154081). uS12m is required for respiratory growth (PubMed:11780787).</text>
</comment>
<comment type="subunit">
    <text evidence="6">Component of the mitochondrial small ribosomal subunit (mt-SSU). Mature yeast 74S mitochondrial ribosomes consist of a small (37S) and a large (54S) subunit. The 37S small subunit contains a 15S ribosomal RNA (15S mt-rRNA) and 34 different proteins. The 54S large subunit contains a 21S rRNA (21S mt-rRNA) and 46 different proteins. uS12m forms part of the decoding center of the mt-SSU.</text>
</comment>
<comment type="subcellular location">
    <subcellularLocation>
        <location evidence="4">Mitochondrion</location>
    </subcellularLocation>
    <text evidence="5">Mitoribosomes are tethered to the mitochondrial inner membrane and spatially aligned with the membrane insertion machinery through two distinct membrane contact sites, formed by the 21S rRNA expansion segment 96-ES1 and the inner membrane protein MBA1.</text>
</comment>
<comment type="miscellaneous">
    <text evidence="3">Present with 238 molecules/cell in log phase SD medium.</text>
</comment>
<comment type="similarity">
    <text evidence="8">Belongs to the universal ribosomal protein uS12 family.</text>
</comment>
<organism>
    <name type="scientific">Saccharomyces cerevisiae (strain ATCC 204508 / S288c)</name>
    <name type="common">Baker's yeast</name>
    <dbReference type="NCBI Taxonomy" id="559292"/>
    <lineage>
        <taxon>Eukaryota</taxon>
        <taxon>Fungi</taxon>
        <taxon>Dikarya</taxon>
        <taxon>Ascomycota</taxon>
        <taxon>Saccharomycotina</taxon>
        <taxon>Saccharomycetes</taxon>
        <taxon>Saccharomycetales</taxon>
        <taxon>Saccharomycetaceae</taxon>
        <taxon>Saccharomyces</taxon>
    </lineage>
</organism>
<sequence>MLSRFMSNTWCTPLRQAQRLFSSTTTMQATLNQIKRGSGPPRRKKISTAPQLDQCPQRKGVVLRVMVLKPKKPNSAQRKACRVRLTNGNVVSAYIPGEGHDAQEHSIVYVRGGRCQDLPGVKYHVIRGAGDLSGVVNRISSRSKYGAKKPSKS</sequence>
<protein>
    <recommendedName>
        <fullName evidence="7">Small ribosomal subunit protein uS12m</fullName>
    </recommendedName>
    <alternativeName>
        <fullName>37S ribosomal protein S12, mitochondrial</fullName>
    </alternativeName>
</protein>
<dbReference type="EMBL" id="Z71651">
    <property type="protein sequence ID" value="CAA96316.1"/>
    <property type="molecule type" value="Genomic_DNA"/>
</dbReference>
<dbReference type="EMBL" id="AY558003">
    <property type="protein sequence ID" value="AAS56329.1"/>
    <property type="molecule type" value="Genomic_DNA"/>
</dbReference>
<dbReference type="EMBL" id="BK006947">
    <property type="protein sequence ID" value="DAA10578.1"/>
    <property type="molecule type" value="Genomic_DNA"/>
</dbReference>
<dbReference type="PIR" id="S63367">
    <property type="entry name" value="S63367"/>
</dbReference>
<dbReference type="RefSeq" id="NP_014434.1">
    <property type="nucleotide sequence ID" value="NM_001183213.1"/>
</dbReference>
<dbReference type="PDB" id="5MRC">
    <property type="method" value="EM"/>
    <property type="resolution" value="3.25 A"/>
    <property type="chains" value="LL=29-152"/>
</dbReference>
<dbReference type="PDB" id="5MRE">
    <property type="method" value="EM"/>
    <property type="resolution" value="3.75 A"/>
    <property type="chains" value="LL=29-152"/>
</dbReference>
<dbReference type="PDB" id="5MRF">
    <property type="method" value="EM"/>
    <property type="resolution" value="4.97 A"/>
    <property type="chains" value="LL=29-152"/>
</dbReference>
<dbReference type="PDB" id="8D8J">
    <property type="method" value="EM"/>
    <property type="resolution" value="3.80 A"/>
    <property type="chains" value="L=1-153"/>
</dbReference>
<dbReference type="PDB" id="8D8K">
    <property type="method" value="EM"/>
    <property type="resolution" value="3.13 A"/>
    <property type="chains" value="L=1-153"/>
</dbReference>
<dbReference type="PDB" id="8D8L">
    <property type="method" value="EM"/>
    <property type="resolution" value="2.60 A"/>
    <property type="chains" value="L=1-153"/>
</dbReference>
<dbReference type="PDB" id="8OM2">
    <property type="method" value="EM"/>
    <property type="resolution" value="2.57 A"/>
    <property type="chains" value="L=1-153"/>
</dbReference>
<dbReference type="PDB" id="8OM3">
    <property type="method" value="EM"/>
    <property type="resolution" value="2.87 A"/>
    <property type="chains" value="L=1-153"/>
</dbReference>
<dbReference type="PDB" id="8OM4">
    <property type="method" value="EM"/>
    <property type="resolution" value="2.32 A"/>
    <property type="chains" value="L=1-153"/>
</dbReference>
<dbReference type="PDBsum" id="5MRC"/>
<dbReference type="PDBsum" id="5MRE"/>
<dbReference type="PDBsum" id="5MRF"/>
<dbReference type="PDBsum" id="8D8J"/>
<dbReference type="PDBsum" id="8D8K"/>
<dbReference type="PDBsum" id="8D8L"/>
<dbReference type="PDBsum" id="8OM2"/>
<dbReference type="PDBsum" id="8OM3"/>
<dbReference type="PDBsum" id="8OM4"/>
<dbReference type="EMDB" id="EMD-16966"/>
<dbReference type="EMDB" id="EMD-16967"/>
<dbReference type="EMDB" id="EMD-16968"/>
<dbReference type="EMDB" id="EMD-27251"/>
<dbReference type="EMDB" id="EMD-3551"/>
<dbReference type="EMDB" id="EMD-3552"/>
<dbReference type="EMDB" id="EMD-3553"/>
<dbReference type="SMR" id="P53732"/>
<dbReference type="BioGRID" id="35862">
    <property type="interactions" value="107"/>
</dbReference>
<dbReference type="ComplexPortal" id="CPX-1603">
    <property type="entry name" value="37S mitochondrial small ribosomal subunit"/>
</dbReference>
<dbReference type="DIP" id="DIP-5562N"/>
<dbReference type="FunCoup" id="P53732">
    <property type="interactions" value="529"/>
</dbReference>
<dbReference type="IntAct" id="P53732">
    <property type="interactions" value="40"/>
</dbReference>
<dbReference type="MINT" id="P53732"/>
<dbReference type="STRING" id="4932.YNR036C"/>
<dbReference type="PaxDb" id="4932-YNR036C"/>
<dbReference type="PeptideAtlas" id="P53732"/>
<dbReference type="EnsemblFungi" id="YNR036C_mRNA">
    <property type="protein sequence ID" value="YNR036C"/>
    <property type="gene ID" value="YNR036C"/>
</dbReference>
<dbReference type="GeneID" id="855772"/>
<dbReference type="KEGG" id="sce:YNR036C"/>
<dbReference type="AGR" id="SGD:S000005319"/>
<dbReference type="SGD" id="S000005319">
    <property type="gene designation" value="MRPS12"/>
</dbReference>
<dbReference type="VEuPathDB" id="FungiDB:YNR036C"/>
<dbReference type="eggNOG" id="KOG1750">
    <property type="taxonomic scope" value="Eukaryota"/>
</dbReference>
<dbReference type="GeneTree" id="ENSGT00960000189191"/>
<dbReference type="HOGENOM" id="CLU_104295_0_0_1"/>
<dbReference type="InParanoid" id="P53732"/>
<dbReference type="OMA" id="VCIRVYT"/>
<dbReference type="OrthoDB" id="361013at2759"/>
<dbReference type="BioCyc" id="YEAST:G3O-33346-MONOMER"/>
<dbReference type="BioGRID-ORCS" id="855772">
    <property type="hits" value="10 hits in 10 CRISPR screens"/>
</dbReference>
<dbReference type="PRO" id="PR:P53732"/>
<dbReference type="Proteomes" id="UP000002311">
    <property type="component" value="Chromosome XIV"/>
</dbReference>
<dbReference type="RNAct" id="P53732">
    <property type="molecule type" value="protein"/>
</dbReference>
<dbReference type="GO" id="GO:0005743">
    <property type="term" value="C:mitochondrial inner membrane"/>
    <property type="evidence" value="ECO:0000303"/>
    <property type="project" value="ComplexPortal"/>
</dbReference>
<dbReference type="GO" id="GO:0005763">
    <property type="term" value="C:mitochondrial small ribosomal subunit"/>
    <property type="evidence" value="ECO:0000314"/>
    <property type="project" value="SGD"/>
</dbReference>
<dbReference type="GO" id="GO:0005739">
    <property type="term" value="C:mitochondrion"/>
    <property type="evidence" value="ECO:0007005"/>
    <property type="project" value="SGD"/>
</dbReference>
<dbReference type="GO" id="GO:0005840">
    <property type="term" value="C:ribosome"/>
    <property type="evidence" value="ECO:0000318"/>
    <property type="project" value="GO_Central"/>
</dbReference>
<dbReference type="GO" id="GO:0003735">
    <property type="term" value="F:structural constituent of ribosome"/>
    <property type="evidence" value="ECO:0000314"/>
    <property type="project" value="SGD"/>
</dbReference>
<dbReference type="GO" id="GO:0032543">
    <property type="term" value="P:mitochondrial translation"/>
    <property type="evidence" value="ECO:0000250"/>
    <property type="project" value="UniProtKB"/>
</dbReference>
<dbReference type="GO" id="GO:0006412">
    <property type="term" value="P:translation"/>
    <property type="evidence" value="ECO:0000318"/>
    <property type="project" value="GO_Central"/>
</dbReference>
<dbReference type="CDD" id="cd03368">
    <property type="entry name" value="Ribosomal_S12"/>
    <property type="match status" value="1"/>
</dbReference>
<dbReference type="FunFam" id="2.40.50.140:FF:000099">
    <property type="entry name" value="Ribosomal protein S12, mitochondrial"/>
    <property type="match status" value="1"/>
</dbReference>
<dbReference type="Gene3D" id="2.40.50.140">
    <property type="entry name" value="Nucleic acid-binding proteins"/>
    <property type="match status" value="1"/>
</dbReference>
<dbReference type="InterPro" id="IPR012340">
    <property type="entry name" value="NA-bd_OB-fold"/>
</dbReference>
<dbReference type="InterPro" id="IPR006032">
    <property type="entry name" value="Ribosomal_uS12"/>
</dbReference>
<dbReference type="InterPro" id="IPR005679">
    <property type="entry name" value="Ribosomal_uS12_bac"/>
</dbReference>
<dbReference type="NCBIfam" id="TIGR00981">
    <property type="entry name" value="rpsL_bact"/>
    <property type="match status" value="1"/>
</dbReference>
<dbReference type="PANTHER" id="PTHR11652">
    <property type="entry name" value="30S RIBOSOMAL PROTEIN S12 FAMILY MEMBER"/>
    <property type="match status" value="1"/>
</dbReference>
<dbReference type="Pfam" id="PF00164">
    <property type="entry name" value="Ribosom_S12_S23"/>
    <property type="match status" value="1"/>
</dbReference>
<dbReference type="PIRSF" id="PIRSF002133">
    <property type="entry name" value="Ribosomal_S12/S23"/>
    <property type="match status" value="1"/>
</dbReference>
<dbReference type="PRINTS" id="PR01034">
    <property type="entry name" value="RIBOSOMALS12"/>
</dbReference>
<dbReference type="SUPFAM" id="SSF50249">
    <property type="entry name" value="Nucleic acid-binding proteins"/>
    <property type="match status" value="1"/>
</dbReference>
<dbReference type="PROSITE" id="PS00055">
    <property type="entry name" value="RIBOSOMAL_S12"/>
    <property type="match status" value="1"/>
</dbReference>
<proteinExistence type="evidence at protein level"/>
<name>RT12_YEAST</name>
<feature type="transit peptide" description="Mitochondrion" evidence="1">
    <location>
        <begin position="1"/>
        <end position="20"/>
    </location>
</feature>
<feature type="chain" id="PRO_0000146483" description="Small ribosomal subunit protein uS12m">
    <location>
        <begin position="21"/>
        <end position="153"/>
    </location>
</feature>
<feature type="helix" evidence="11">
    <location>
        <begin position="31"/>
        <end position="35"/>
    </location>
</feature>
<feature type="helix" evidence="11">
    <location>
        <begin position="50"/>
        <end position="52"/>
    </location>
</feature>
<feature type="strand" evidence="11">
    <location>
        <begin position="56"/>
        <end position="68"/>
    </location>
</feature>
<feature type="strand" evidence="11">
    <location>
        <begin position="78"/>
        <end position="85"/>
    </location>
</feature>
<feature type="strand" evidence="11">
    <location>
        <begin position="90"/>
        <end position="94"/>
    </location>
</feature>
<feature type="strand" evidence="11">
    <location>
        <begin position="107"/>
        <end position="112"/>
    </location>
</feature>
<feature type="strand" evidence="11">
    <location>
        <begin position="123"/>
        <end position="125"/>
    </location>
</feature>
<feature type="helix" evidence="11">
    <location>
        <begin position="142"/>
        <end position="145"/>
    </location>
</feature>
<evidence type="ECO:0000255" key="1"/>
<evidence type="ECO:0000269" key="2">
    <source>
    </source>
</evidence>
<evidence type="ECO:0000269" key="3">
    <source>
    </source>
</evidence>
<evidence type="ECO:0000269" key="4">
    <source>
    </source>
</evidence>
<evidence type="ECO:0000269" key="5">
    <source>
    </source>
</evidence>
<evidence type="ECO:0000269" key="6">
    <source>
    </source>
</evidence>
<evidence type="ECO:0000303" key="7">
    <source>
    </source>
</evidence>
<evidence type="ECO:0000305" key="8"/>
<evidence type="ECO:0000305" key="9">
    <source>
    </source>
</evidence>
<evidence type="ECO:0000305" key="10">
    <source>
    </source>
</evidence>
<evidence type="ECO:0007829" key="11">
    <source>
        <dbReference type="PDB" id="8D8L"/>
    </source>
</evidence>
<gene>
    <name type="primary">MRPS12</name>
    <name type="ordered locus">YNR036C</name>
    <name type="ORF">N3298</name>
</gene>